<keyword id="KW-0963">Cytoplasm</keyword>
<keyword id="KW-0903">Direct protein sequencing</keyword>
<keyword id="KW-0251">Elongation factor</keyword>
<keyword id="KW-0342">GTP-binding</keyword>
<keyword id="KW-0488">Methylation</keyword>
<keyword id="KW-0547">Nucleotide-binding</keyword>
<keyword id="KW-0597">Phosphoprotein</keyword>
<keyword id="KW-0648">Protein biosynthesis</keyword>
<accession>Q40034</accession>
<gene>
    <name type="primary">BLT63</name>
</gene>
<organism>
    <name type="scientific">Hordeum vulgare</name>
    <name type="common">Barley</name>
    <dbReference type="NCBI Taxonomy" id="4513"/>
    <lineage>
        <taxon>Eukaryota</taxon>
        <taxon>Viridiplantae</taxon>
        <taxon>Streptophyta</taxon>
        <taxon>Embryophyta</taxon>
        <taxon>Tracheophyta</taxon>
        <taxon>Spermatophyta</taxon>
        <taxon>Magnoliopsida</taxon>
        <taxon>Liliopsida</taxon>
        <taxon>Poales</taxon>
        <taxon>Poaceae</taxon>
        <taxon>BOP clade</taxon>
        <taxon>Pooideae</taxon>
        <taxon>Triticodae</taxon>
        <taxon>Triticeae</taxon>
        <taxon>Hordeinae</taxon>
        <taxon>Hordeum</taxon>
    </lineage>
</organism>
<sequence>MGKEKIHISIVVIGHVDSGKSTTTGHLIYKLGGIDKRVIESFEKEAAEMNKRSFKYAWVLDKLKAERERGITIDIALWKFETTKYSCTVIDAPGHRDFIKNMITGTSQADCAVLIIDSTTGGFEAGISKDGQTREHALLAFTLGVKHMICCCNKMDATTPKYSKSRYDEIVKEVSSYLKKVGYNPDKVPFVPISGFEGDNMIERSSNLDWYKGPTLLEALDQINEPKRPSEKPLRLPLQDVYKIGGIGTVPVGRVETGVIKPGMVVTFGPTGLTTEVKSVEMHHESLLEALPGDNVGFNVKNVAVKDLKRGYVASNSKDDPAKEAANFTAQVIIMNHPGQISNGYAPVLDCHTSHIAVKFAEIQTKIDRRSGKELEAAPKFLKNGDAGFVKMIPTKPMVVETFAQYPPLGRFAVRDMRQTVAVGVIKSVEKKEPTGAKVTKAAIKKK</sequence>
<name>EF1A2_HORVU</name>
<feature type="chain" id="PRO_0000090937" description="Elongation factor 1-alpha">
    <location>
        <begin position="1"/>
        <end position="447"/>
    </location>
</feature>
<feature type="domain" description="tr-type G">
    <location>
        <begin position="5"/>
        <end position="230"/>
    </location>
</feature>
<feature type="region of interest" description="G1" evidence="1">
    <location>
        <begin position="14"/>
        <end position="21"/>
    </location>
</feature>
<feature type="region of interest" description="G2" evidence="1">
    <location>
        <begin position="70"/>
        <end position="74"/>
    </location>
</feature>
<feature type="region of interest" description="G3" evidence="1">
    <location>
        <begin position="91"/>
        <end position="94"/>
    </location>
</feature>
<feature type="region of interest" description="G4" evidence="1">
    <location>
        <begin position="153"/>
        <end position="156"/>
    </location>
</feature>
<feature type="region of interest" description="G5" evidence="1">
    <location>
        <begin position="194"/>
        <end position="196"/>
    </location>
</feature>
<feature type="binding site" evidence="1">
    <location>
        <begin position="14"/>
        <end position="21"/>
    </location>
    <ligand>
        <name>GTP</name>
        <dbReference type="ChEBI" id="CHEBI:37565"/>
    </ligand>
</feature>
<feature type="binding site" evidence="1">
    <location>
        <begin position="91"/>
        <end position="95"/>
    </location>
    <ligand>
        <name>GTP</name>
        <dbReference type="ChEBI" id="CHEBI:37565"/>
    </ligand>
</feature>
<feature type="binding site" evidence="1">
    <location>
        <begin position="153"/>
        <end position="156"/>
    </location>
    <ligand>
        <name>GTP</name>
        <dbReference type="ChEBI" id="CHEBI:37565"/>
    </ligand>
</feature>
<feature type="modified residue" description="N6,N6-dimethyllysine" evidence="2">
    <location>
        <position position="55"/>
    </location>
</feature>
<feature type="modified residue" description="N6,N6,N6-trimethyllysine" evidence="2">
    <location>
        <position position="79"/>
    </location>
</feature>
<feature type="modified residue" description="N6,N6,N6-trimethyllysine" evidence="2">
    <location>
        <position position="187"/>
    </location>
</feature>
<feature type="modified residue" description="N6-methyllysine" evidence="2">
    <location>
        <position position="261"/>
    </location>
</feature>
<feature type="modified residue" description="5-glutamyl glycerylphosphorylethanolamine" evidence="1">
    <location>
        <position position="289"/>
    </location>
</feature>
<feature type="modified residue" description="N6,N6,N6-trimethyllysine" evidence="2">
    <location>
        <position position="306"/>
    </location>
</feature>
<feature type="modified residue" description="5-glutamyl glycerylphosphorylethanolamine" evidence="1">
    <location>
        <position position="362"/>
    </location>
</feature>
<feature type="modified residue" description="N6,N6,N6-trimethyllysine" evidence="2">
    <location>
        <position position="396"/>
    </location>
</feature>
<proteinExistence type="evidence at protein level"/>
<reference key="1">
    <citation type="journal article" date="1993" name="Plant Mol. Biol.">
        <title>A low-temperature-responsive translation elongation factor 1 alpha from barley (Hordeum vulgare L.).</title>
        <authorList>
            <person name="Dunn A.M."/>
            <person name="Morris A."/>
            <person name="Jack P.L."/>
            <person name="Hughes M.A."/>
        </authorList>
    </citation>
    <scope>NUCLEOTIDE SEQUENCE [MRNA]</scope>
    <source>
        <strain>cv. Igri</strain>
        <tissue>Meristem</tissue>
    </source>
</reference>
<reference key="2">
    <citation type="journal article" date="2000" name="Electrophoresis">
        <title>Separation and characterization of basic barley seed proteins.</title>
        <authorList>
            <person name="Kristoffersen H.E."/>
            <person name="Flengsrud R."/>
        </authorList>
    </citation>
    <scope>PROTEIN SEQUENCE OF 155-161; 201-205 AND 335-341</scope>
    <source>
        <strain>cv. Bomi</strain>
        <tissue>Starchy endosperm</tissue>
    </source>
</reference>
<dbReference type="EMBL" id="Z23130">
    <property type="protein sequence ID" value="CAA80666.1"/>
    <property type="molecule type" value="mRNA"/>
</dbReference>
<dbReference type="PIR" id="S39505">
    <property type="entry name" value="S39505"/>
</dbReference>
<dbReference type="SMR" id="Q40034"/>
<dbReference type="ExpressionAtlas" id="Q40034">
    <property type="expression patterns" value="baseline and differential"/>
</dbReference>
<dbReference type="GO" id="GO:0005737">
    <property type="term" value="C:cytoplasm"/>
    <property type="evidence" value="ECO:0007669"/>
    <property type="project" value="UniProtKB-SubCell"/>
</dbReference>
<dbReference type="GO" id="GO:0005525">
    <property type="term" value="F:GTP binding"/>
    <property type="evidence" value="ECO:0007669"/>
    <property type="project" value="UniProtKB-KW"/>
</dbReference>
<dbReference type="GO" id="GO:0003924">
    <property type="term" value="F:GTPase activity"/>
    <property type="evidence" value="ECO:0007669"/>
    <property type="project" value="InterPro"/>
</dbReference>
<dbReference type="GO" id="GO:0003746">
    <property type="term" value="F:translation elongation factor activity"/>
    <property type="evidence" value="ECO:0007669"/>
    <property type="project" value="UniProtKB-KW"/>
</dbReference>
<dbReference type="CDD" id="cd01883">
    <property type="entry name" value="EF1_alpha"/>
    <property type="match status" value="1"/>
</dbReference>
<dbReference type="CDD" id="cd03693">
    <property type="entry name" value="EF1_alpha_II"/>
    <property type="match status" value="1"/>
</dbReference>
<dbReference type="CDD" id="cd03705">
    <property type="entry name" value="EF1_alpha_III"/>
    <property type="match status" value="1"/>
</dbReference>
<dbReference type="FunFam" id="2.40.30.10:FF:000003">
    <property type="entry name" value="Elongation factor 1-alpha"/>
    <property type="match status" value="1"/>
</dbReference>
<dbReference type="FunFam" id="2.40.30.10:FF:000005">
    <property type="entry name" value="Elongation factor 1-alpha"/>
    <property type="match status" value="1"/>
</dbReference>
<dbReference type="FunFam" id="3.40.50.300:FF:000255">
    <property type="entry name" value="Elongation factor 1-alpha"/>
    <property type="match status" value="1"/>
</dbReference>
<dbReference type="Gene3D" id="3.40.50.300">
    <property type="entry name" value="P-loop containing nucleotide triphosphate hydrolases"/>
    <property type="match status" value="1"/>
</dbReference>
<dbReference type="Gene3D" id="2.40.30.10">
    <property type="entry name" value="Translation factors"/>
    <property type="match status" value="2"/>
</dbReference>
<dbReference type="HAMAP" id="MF_00118_A">
    <property type="entry name" value="EF_Tu_A"/>
    <property type="match status" value="1"/>
</dbReference>
<dbReference type="InterPro" id="IPR004161">
    <property type="entry name" value="EFTu-like_2"/>
</dbReference>
<dbReference type="InterPro" id="IPR031157">
    <property type="entry name" value="G_TR_CS"/>
</dbReference>
<dbReference type="InterPro" id="IPR054696">
    <property type="entry name" value="GTP-eEF1A_C"/>
</dbReference>
<dbReference type="InterPro" id="IPR027417">
    <property type="entry name" value="P-loop_NTPase"/>
</dbReference>
<dbReference type="InterPro" id="IPR000795">
    <property type="entry name" value="T_Tr_GTP-bd_dom"/>
</dbReference>
<dbReference type="InterPro" id="IPR050100">
    <property type="entry name" value="TRAFAC_GTPase_members"/>
</dbReference>
<dbReference type="InterPro" id="IPR009000">
    <property type="entry name" value="Transl_B-barrel_sf"/>
</dbReference>
<dbReference type="InterPro" id="IPR009001">
    <property type="entry name" value="Transl_elong_EF1A/Init_IF2_C"/>
</dbReference>
<dbReference type="InterPro" id="IPR004539">
    <property type="entry name" value="Transl_elong_EF1A_euk/arc"/>
</dbReference>
<dbReference type="NCBIfam" id="TIGR00483">
    <property type="entry name" value="EF-1_alpha"/>
    <property type="match status" value="1"/>
</dbReference>
<dbReference type="NCBIfam" id="NF008969">
    <property type="entry name" value="PRK12317.1"/>
    <property type="match status" value="1"/>
</dbReference>
<dbReference type="PANTHER" id="PTHR23115">
    <property type="entry name" value="TRANSLATION FACTOR"/>
    <property type="match status" value="1"/>
</dbReference>
<dbReference type="Pfam" id="PF22594">
    <property type="entry name" value="GTP-eEF1A_C"/>
    <property type="match status" value="1"/>
</dbReference>
<dbReference type="Pfam" id="PF00009">
    <property type="entry name" value="GTP_EFTU"/>
    <property type="match status" value="1"/>
</dbReference>
<dbReference type="Pfam" id="PF03144">
    <property type="entry name" value="GTP_EFTU_D2"/>
    <property type="match status" value="1"/>
</dbReference>
<dbReference type="PRINTS" id="PR00315">
    <property type="entry name" value="ELONGATNFCT"/>
</dbReference>
<dbReference type="SUPFAM" id="SSF50465">
    <property type="entry name" value="EF-Tu/eEF-1alpha/eIF2-gamma C-terminal domain"/>
    <property type="match status" value="1"/>
</dbReference>
<dbReference type="SUPFAM" id="SSF52540">
    <property type="entry name" value="P-loop containing nucleoside triphosphate hydrolases"/>
    <property type="match status" value="1"/>
</dbReference>
<dbReference type="SUPFAM" id="SSF50447">
    <property type="entry name" value="Translation proteins"/>
    <property type="match status" value="1"/>
</dbReference>
<dbReference type="PROSITE" id="PS00301">
    <property type="entry name" value="G_TR_1"/>
    <property type="match status" value="1"/>
</dbReference>
<dbReference type="PROSITE" id="PS51722">
    <property type="entry name" value="G_TR_2"/>
    <property type="match status" value="1"/>
</dbReference>
<protein>
    <recommendedName>
        <fullName>Elongation factor 1-alpha</fullName>
        <shortName>EF-1-alpha</shortName>
    </recommendedName>
</protein>
<comment type="function">
    <text>This protein promotes the GTP-dependent binding of aminoacyl-tRNA to the A-site of ribosomes during protein biosynthesis.</text>
</comment>
<comment type="subcellular location">
    <subcellularLocation>
        <location>Cytoplasm</location>
    </subcellularLocation>
</comment>
<comment type="similarity">
    <text evidence="3">Belongs to the TRAFAC class translation factor GTPase superfamily. Classic translation factor GTPase family. EF-Tu/EF-1A subfamily.</text>
</comment>
<evidence type="ECO:0000250" key="1"/>
<evidence type="ECO:0000250" key="2">
    <source>
        <dbReference type="UniProtKB" id="Q8GTY0"/>
    </source>
</evidence>
<evidence type="ECO:0000305" key="3"/>